<protein>
    <recommendedName>
        <fullName evidence="1">Ribosome-recycling factor</fullName>
        <shortName evidence="1">RRF</shortName>
    </recommendedName>
    <alternativeName>
        <fullName evidence="1">Ribosome-releasing factor</fullName>
    </alternativeName>
</protein>
<proteinExistence type="inferred from homology"/>
<keyword id="KW-0963">Cytoplasm</keyword>
<keyword id="KW-0648">Protein biosynthesis</keyword>
<keyword id="KW-1185">Reference proteome</keyword>
<dbReference type="EMBL" id="AE015924">
    <property type="protein sequence ID" value="AAQ66885.1"/>
    <property type="status" value="ALT_INIT"/>
    <property type="molecule type" value="Genomic_DNA"/>
</dbReference>
<dbReference type="RefSeq" id="WP_004583567.1">
    <property type="nucleotide sequence ID" value="NC_002950.2"/>
</dbReference>
<dbReference type="SMR" id="Q7MTP6"/>
<dbReference type="STRING" id="242619.PG_1901"/>
<dbReference type="EnsemblBacteria" id="AAQ66885">
    <property type="protein sequence ID" value="AAQ66885"/>
    <property type="gene ID" value="PG_1901"/>
</dbReference>
<dbReference type="KEGG" id="pgi:PG_1901"/>
<dbReference type="eggNOG" id="COG0233">
    <property type="taxonomic scope" value="Bacteria"/>
</dbReference>
<dbReference type="HOGENOM" id="CLU_073981_2_0_10"/>
<dbReference type="Proteomes" id="UP000000588">
    <property type="component" value="Chromosome"/>
</dbReference>
<dbReference type="GO" id="GO:0005737">
    <property type="term" value="C:cytoplasm"/>
    <property type="evidence" value="ECO:0007669"/>
    <property type="project" value="UniProtKB-SubCell"/>
</dbReference>
<dbReference type="GO" id="GO:0043023">
    <property type="term" value="F:ribosomal large subunit binding"/>
    <property type="evidence" value="ECO:0007669"/>
    <property type="project" value="TreeGrafter"/>
</dbReference>
<dbReference type="GO" id="GO:0006415">
    <property type="term" value="P:translational termination"/>
    <property type="evidence" value="ECO:0007669"/>
    <property type="project" value="UniProtKB-UniRule"/>
</dbReference>
<dbReference type="CDD" id="cd00520">
    <property type="entry name" value="RRF"/>
    <property type="match status" value="1"/>
</dbReference>
<dbReference type="FunFam" id="1.10.132.20:FF:000001">
    <property type="entry name" value="Ribosome-recycling factor"/>
    <property type="match status" value="1"/>
</dbReference>
<dbReference type="FunFam" id="3.30.1360.40:FF:000001">
    <property type="entry name" value="Ribosome-recycling factor"/>
    <property type="match status" value="1"/>
</dbReference>
<dbReference type="Gene3D" id="3.30.1360.40">
    <property type="match status" value="1"/>
</dbReference>
<dbReference type="Gene3D" id="1.10.132.20">
    <property type="entry name" value="Ribosome-recycling factor"/>
    <property type="match status" value="1"/>
</dbReference>
<dbReference type="HAMAP" id="MF_00040">
    <property type="entry name" value="RRF"/>
    <property type="match status" value="1"/>
</dbReference>
<dbReference type="InterPro" id="IPR002661">
    <property type="entry name" value="Ribosome_recyc_fac"/>
</dbReference>
<dbReference type="InterPro" id="IPR023584">
    <property type="entry name" value="Ribosome_recyc_fac_dom"/>
</dbReference>
<dbReference type="InterPro" id="IPR036191">
    <property type="entry name" value="RRF_sf"/>
</dbReference>
<dbReference type="NCBIfam" id="TIGR00496">
    <property type="entry name" value="frr"/>
    <property type="match status" value="1"/>
</dbReference>
<dbReference type="PANTHER" id="PTHR20982:SF3">
    <property type="entry name" value="MITOCHONDRIAL RIBOSOME RECYCLING FACTOR PSEUDO 1"/>
    <property type="match status" value="1"/>
</dbReference>
<dbReference type="PANTHER" id="PTHR20982">
    <property type="entry name" value="RIBOSOME RECYCLING FACTOR"/>
    <property type="match status" value="1"/>
</dbReference>
<dbReference type="Pfam" id="PF01765">
    <property type="entry name" value="RRF"/>
    <property type="match status" value="1"/>
</dbReference>
<dbReference type="SUPFAM" id="SSF55194">
    <property type="entry name" value="Ribosome recycling factor, RRF"/>
    <property type="match status" value="1"/>
</dbReference>
<name>RRF_PORGI</name>
<organism>
    <name type="scientific">Porphyromonas gingivalis (strain ATCC BAA-308 / W83)</name>
    <dbReference type="NCBI Taxonomy" id="242619"/>
    <lineage>
        <taxon>Bacteria</taxon>
        <taxon>Pseudomonadati</taxon>
        <taxon>Bacteroidota</taxon>
        <taxon>Bacteroidia</taxon>
        <taxon>Bacteroidales</taxon>
        <taxon>Porphyromonadaceae</taxon>
        <taxon>Porphyromonas</taxon>
    </lineage>
</organism>
<evidence type="ECO:0000255" key="1">
    <source>
        <dbReference type="HAMAP-Rule" id="MF_00040"/>
    </source>
</evidence>
<evidence type="ECO:0000305" key="2"/>
<gene>
    <name evidence="1" type="primary">frr</name>
    <name type="ordered locus">PG_1901</name>
</gene>
<feature type="chain" id="PRO_0000167513" description="Ribosome-recycling factor">
    <location>
        <begin position="1"/>
        <end position="186"/>
    </location>
</feature>
<reference key="1">
    <citation type="journal article" date="2003" name="J. Bacteriol.">
        <title>Complete genome sequence of the oral pathogenic bacterium Porphyromonas gingivalis strain W83.</title>
        <authorList>
            <person name="Nelson K.E."/>
            <person name="Fleischmann R.D."/>
            <person name="DeBoy R.T."/>
            <person name="Paulsen I.T."/>
            <person name="Fouts D.E."/>
            <person name="Eisen J.A."/>
            <person name="Daugherty S.C."/>
            <person name="Dodson R.J."/>
            <person name="Durkin A.S."/>
            <person name="Gwinn M.L."/>
            <person name="Haft D.H."/>
            <person name="Kolonay J.F."/>
            <person name="Nelson W.C."/>
            <person name="Mason T.M."/>
            <person name="Tallon L."/>
            <person name="Gray J."/>
            <person name="Granger D."/>
            <person name="Tettelin H."/>
            <person name="Dong H."/>
            <person name="Galvin J.L."/>
            <person name="Duncan M.J."/>
            <person name="Dewhirst F.E."/>
            <person name="Fraser C.M."/>
        </authorList>
    </citation>
    <scope>NUCLEOTIDE SEQUENCE [LARGE SCALE GENOMIC DNA]</scope>
    <source>
        <strain>ATCC BAA-308 / W83</strain>
    </source>
</reference>
<sequence length="186" mass="20786">MEIKELIAKATANMEKAVEYLDEQLSHVRAGKASPKLLDGIMVMYYGNATPLTQVASINTPDAKTIVVTPWERSLIKDIEKAIMDSPLGITPENNGELIRLGLPPLTEERRRQLVKQTKGDAEDAKVSVRNARRDAIDAIKKSVKTDGTPEDVAKDAEAEMQKVHDRYIKKIDELFAEKEKEIMTV</sequence>
<accession>Q7MTP6</accession>
<comment type="function">
    <text evidence="1">Responsible for the release of ribosomes from messenger RNA at the termination of protein biosynthesis. May increase the efficiency of translation by recycling ribosomes from one round of translation to another.</text>
</comment>
<comment type="subcellular location">
    <subcellularLocation>
        <location evidence="1">Cytoplasm</location>
    </subcellularLocation>
</comment>
<comment type="similarity">
    <text evidence="1">Belongs to the RRF family.</text>
</comment>
<comment type="sequence caution" evidence="2">
    <conflict type="erroneous initiation">
        <sequence resource="EMBL-CDS" id="AAQ66885"/>
    </conflict>
</comment>